<organism>
    <name type="scientific">Bos taurus</name>
    <name type="common">Bovine</name>
    <dbReference type="NCBI Taxonomy" id="9913"/>
    <lineage>
        <taxon>Eukaryota</taxon>
        <taxon>Metazoa</taxon>
        <taxon>Chordata</taxon>
        <taxon>Craniata</taxon>
        <taxon>Vertebrata</taxon>
        <taxon>Euteleostomi</taxon>
        <taxon>Mammalia</taxon>
        <taxon>Eutheria</taxon>
        <taxon>Laurasiatheria</taxon>
        <taxon>Artiodactyla</taxon>
        <taxon>Ruminantia</taxon>
        <taxon>Pecora</taxon>
        <taxon>Bovidae</taxon>
        <taxon>Bovinae</taxon>
        <taxon>Bos</taxon>
    </lineage>
</organism>
<protein>
    <recommendedName>
        <fullName>Transmembrane protein 106B</fullName>
    </recommendedName>
</protein>
<feature type="initiator methionine" description="Removed" evidence="3">
    <location>
        <position position="1"/>
    </location>
</feature>
<feature type="chain" id="PRO_0000242649" description="Transmembrane protein 106B">
    <location>
        <begin position="2"/>
        <end position="275"/>
    </location>
</feature>
<feature type="topological domain" description="Cytoplasmic" evidence="4">
    <location>
        <begin position="2"/>
        <end position="97"/>
    </location>
</feature>
<feature type="transmembrane region" description="Helical" evidence="4">
    <location>
        <begin position="98"/>
        <end position="118"/>
    </location>
</feature>
<feature type="topological domain" description="Lumenal" evidence="4">
    <location>
        <begin position="119"/>
        <end position="275"/>
    </location>
</feature>
<feature type="region of interest" description="Disordered" evidence="5">
    <location>
        <begin position="1"/>
        <end position="24"/>
    </location>
</feature>
<feature type="lipid moiety-binding region" description="N-myristoyl glycine" evidence="3">
    <location>
        <position position="2"/>
    </location>
</feature>
<feature type="glycosylation site" description="N-linked (GlcNAc...) asparagine" evidence="4">
    <location>
        <position position="146"/>
    </location>
</feature>
<feature type="glycosylation site" description="N-linked (GlcNAc...) asparagine" evidence="4">
    <location>
        <position position="152"/>
    </location>
</feature>
<feature type="glycosylation site" description="N-linked (GlcNAc...) asparagine" evidence="4">
    <location>
        <position position="165"/>
    </location>
</feature>
<feature type="glycosylation site" description="N-linked (GlcNAc...) asparagine" evidence="4">
    <location>
        <position position="184"/>
    </location>
</feature>
<feature type="glycosylation site" description="N-linked (GlcNAc...) asparagine" evidence="4">
    <location>
        <position position="257"/>
    </location>
</feature>
<feature type="disulfide bond" evidence="3">
    <location>
        <begin position="215"/>
        <end position="254"/>
    </location>
</feature>
<reference key="1">
    <citation type="submission" date="2005-08" db="EMBL/GenBank/DDBJ databases">
        <authorList>
            <consortium name="NIH - Mammalian Gene Collection (MGC) project"/>
        </authorList>
    </citation>
    <scope>NUCLEOTIDE SEQUENCE [LARGE SCALE MRNA]</scope>
    <source>
        <strain>Crossbred X Angus</strain>
        <tissue>Ileum</tissue>
    </source>
</reference>
<gene>
    <name type="primary">TMEM106B</name>
</gene>
<name>T106B_BOVIN</name>
<accession>Q3ZC25</accession>
<dbReference type="EMBL" id="BC102965">
    <property type="protein sequence ID" value="AAI02966.1"/>
    <property type="molecule type" value="mRNA"/>
</dbReference>
<dbReference type="RefSeq" id="NP_001029509.1">
    <property type="nucleotide sequence ID" value="NM_001034337.1"/>
</dbReference>
<dbReference type="RefSeq" id="XP_015323767.1">
    <property type="nucleotide sequence ID" value="XM_015468281.1"/>
</dbReference>
<dbReference type="RefSeq" id="XP_015323769.1">
    <property type="nucleotide sequence ID" value="XM_015468283.3"/>
</dbReference>
<dbReference type="FunCoup" id="Q3ZC25">
    <property type="interactions" value="1374"/>
</dbReference>
<dbReference type="STRING" id="9913.ENSBTAP00000026319"/>
<dbReference type="GlyCosmos" id="Q3ZC25">
    <property type="glycosylation" value="5 sites, No reported glycans"/>
</dbReference>
<dbReference type="GlyGen" id="Q3ZC25">
    <property type="glycosylation" value="5 sites"/>
</dbReference>
<dbReference type="PaxDb" id="9913-ENSBTAP00000026319"/>
<dbReference type="Ensembl" id="ENSBTAT00000026319.5">
    <property type="protein sequence ID" value="ENSBTAP00000026319.4"/>
    <property type="gene ID" value="ENSBTAG00000019750.6"/>
</dbReference>
<dbReference type="GeneID" id="508903"/>
<dbReference type="KEGG" id="bta:508903"/>
<dbReference type="CTD" id="54664"/>
<dbReference type="VEuPathDB" id="HostDB:ENSBTAG00000019750"/>
<dbReference type="VGNC" id="VGNC:35945">
    <property type="gene designation" value="TMEM106B"/>
</dbReference>
<dbReference type="eggNOG" id="ENOG502QQRZ">
    <property type="taxonomic scope" value="Eukaryota"/>
</dbReference>
<dbReference type="GeneTree" id="ENSGT00940000158360"/>
<dbReference type="HOGENOM" id="CLU_089337_2_0_1"/>
<dbReference type="InParanoid" id="Q3ZC25"/>
<dbReference type="OMA" id="FGHSEQT"/>
<dbReference type="OrthoDB" id="508875at2759"/>
<dbReference type="TreeFam" id="TF328907"/>
<dbReference type="Proteomes" id="UP000009136">
    <property type="component" value="Chromosome 4"/>
</dbReference>
<dbReference type="Bgee" id="ENSBTAG00000019750">
    <property type="expression patterns" value="Expressed in occipital lobe and 109 other cell types or tissues"/>
</dbReference>
<dbReference type="GO" id="GO:0031902">
    <property type="term" value="C:late endosome membrane"/>
    <property type="evidence" value="ECO:0007669"/>
    <property type="project" value="UniProtKB-SubCell"/>
</dbReference>
<dbReference type="GO" id="GO:0005765">
    <property type="term" value="C:lysosomal membrane"/>
    <property type="evidence" value="ECO:0000250"/>
    <property type="project" value="UniProtKB"/>
</dbReference>
<dbReference type="GO" id="GO:0005764">
    <property type="term" value="C:lysosome"/>
    <property type="evidence" value="ECO:0000250"/>
    <property type="project" value="UniProtKB"/>
</dbReference>
<dbReference type="GO" id="GO:0005886">
    <property type="term" value="C:plasma membrane"/>
    <property type="evidence" value="ECO:0007669"/>
    <property type="project" value="UniProtKB-SubCell"/>
</dbReference>
<dbReference type="GO" id="GO:0051117">
    <property type="term" value="F:ATPase binding"/>
    <property type="evidence" value="ECO:0007669"/>
    <property type="project" value="Ensembl"/>
</dbReference>
<dbReference type="GO" id="GO:0048813">
    <property type="term" value="P:dendrite morphogenesis"/>
    <property type="evidence" value="ECO:0000250"/>
    <property type="project" value="UniProtKB"/>
</dbReference>
<dbReference type="GO" id="GO:0007041">
    <property type="term" value="P:lysosomal transport"/>
    <property type="evidence" value="ECO:0000318"/>
    <property type="project" value="GO_Central"/>
</dbReference>
<dbReference type="GO" id="GO:0032418">
    <property type="term" value="P:lysosome localization"/>
    <property type="evidence" value="ECO:0000250"/>
    <property type="project" value="UniProtKB"/>
</dbReference>
<dbReference type="GO" id="GO:0007040">
    <property type="term" value="P:lysosome organization"/>
    <property type="evidence" value="ECO:0000318"/>
    <property type="project" value="GO_Central"/>
</dbReference>
<dbReference type="InterPro" id="IPR009790">
    <property type="entry name" value="TMEM106"/>
</dbReference>
<dbReference type="InterPro" id="IPR048509">
    <property type="entry name" value="TMEM106_C"/>
</dbReference>
<dbReference type="InterPro" id="IPR048511">
    <property type="entry name" value="TMEM106_N"/>
</dbReference>
<dbReference type="PANTHER" id="PTHR28556">
    <property type="entry name" value="TRANSMEMBRANE PROTEIN 106B"/>
    <property type="match status" value="1"/>
</dbReference>
<dbReference type="PANTHER" id="PTHR28556:SF1">
    <property type="entry name" value="TRANSMEMBRANE PROTEIN 106B"/>
    <property type="match status" value="1"/>
</dbReference>
<dbReference type="Pfam" id="PF07092">
    <property type="entry name" value="TMEM106"/>
    <property type="match status" value="1"/>
</dbReference>
<dbReference type="Pfam" id="PF21002">
    <property type="entry name" value="TMEM106_N"/>
    <property type="match status" value="1"/>
</dbReference>
<dbReference type="SUPFAM" id="SSF117070">
    <property type="entry name" value="LEA14-like"/>
    <property type="match status" value="1"/>
</dbReference>
<comment type="function">
    <text evidence="1 2 3">In neurons, involved in the transport of late endosomes/lysosomes (By similarity). May be involved in dendrite morphogenesis and maintenance by regulating lysosomal trafficking (By similarity). May act as a molecular brake for retrograde transport of late endosomes/lysosomes, possibly via its interaction with MAP6 (By similarity). In motoneurons, may mediate the axonal transport of lysosomes and axonal sorting at the initial segment (By similarity). It remains unclear whether TMEM106B affects the transport of moving lysosomes in the anterograde or retrograde direction in neurites and whether it is particularly important in the sorting of lysosomes in axons or in dendrites (By similarity). In neurons, may also play a role in the regulation of lysosomal size and responsiveness to stress (By similarity). Required for proper lysosomal acidification (By similarity).</text>
</comment>
<comment type="subunit">
    <text evidence="3">Can form homomers (By similarity). Interacts (via N-terminus) with MAP6 (via C-terminus) (By similarity). Interacts (via C-terminus) with the vacuolar-type ATPase subunit ATP6AP1 (By similarity). Interacts (via N-terminus) with AP2M1 and CLTC (By similarity). Interacts with TMEM106C (By similarity).</text>
</comment>
<comment type="subcellular location">
    <subcellularLocation>
        <location evidence="3">Late endosome membrane</location>
        <topology evidence="3">Single-pass type II membrane protein</topology>
    </subcellularLocation>
    <subcellularLocation>
        <location evidence="3">Lysosome membrane</location>
        <topology evidence="3">Single-pass type II membrane protein</topology>
    </subcellularLocation>
    <subcellularLocation>
        <location evidence="3">Cell membrane</location>
        <topology evidence="4">Single-pass type II membrane protein</topology>
    </subcellularLocation>
    <text evidence="3">A small fraction resides on the cell surface.</text>
</comment>
<comment type="similarity">
    <text evidence="6">Belongs to the TMEM106 family.</text>
</comment>
<sequence>MGKSFSHLPLHSNKEDGYDGMTSTENIRNGLVNGEVHNEDGRSGDVSQFPYVEFTGRDSVTCPTCQGTGRIPRGQENQLVALIPYSDQRLRPRRTKLYVMASVFVCLLLSGLAVFFLFPRSIDVKYIGVKSAYVSYDVQKRTIYLNITNTLNITNNNYYSVEVENITAQVQFSKTVIGKARLNNITSIGPLDMKQIDYTVPTVIAEEMSYMFDFCTLLTIKVHNIVLMMQVTVTTTYFGHSEQISQERYQYVDCGRNTTYHLGQSEYLNVLQPQQ</sequence>
<keyword id="KW-1003">Cell membrane</keyword>
<keyword id="KW-1015">Disulfide bond</keyword>
<keyword id="KW-0967">Endosome</keyword>
<keyword id="KW-0325">Glycoprotein</keyword>
<keyword id="KW-0449">Lipoprotein</keyword>
<keyword id="KW-0458">Lysosome</keyword>
<keyword id="KW-0472">Membrane</keyword>
<keyword id="KW-0519">Myristate</keyword>
<keyword id="KW-1185">Reference proteome</keyword>
<keyword id="KW-0735">Signal-anchor</keyword>
<keyword id="KW-0812">Transmembrane</keyword>
<keyword id="KW-1133">Transmembrane helix</keyword>
<keyword id="KW-0813">Transport</keyword>
<proteinExistence type="evidence at transcript level"/>
<evidence type="ECO:0000250" key="1">
    <source>
        <dbReference type="UniProtKB" id="Q6AYA5"/>
    </source>
</evidence>
<evidence type="ECO:0000250" key="2">
    <source>
        <dbReference type="UniProtKB" id="Q80X71"/>
    </source>
</evidence>
<evidence type="ECO:0000250" key="3">
    <source>
        <dbReference type="UniProtKB" id="Q9NUM4"/>
    </source>
</evidence>
<evidence type="ECO:0000255" key="4"/>
<evidence type="ECO:0000256" key="5">
    <source>
        <dbReference type="SAM" id="MobiDB-lite"/>
    </source>
</evidence>
<evidence type="ECO:0000305" key="6"/>